<evidence type="ECO:0000250" key="1"/>
<evidence type="ECO:0000305" key="2"/>
<sequence>MPPNDRAEKQAAAQQAVNILHEISTILNCHLDRQTLSICISMIEKGINPEALANVVKELRKKGQENQLEAAAAAAASSSTTVPSRRR</sequence>
<organism>
    <name type="scientific">Chaetomium globosum (strain ATCC 6205 / CBS 148.51 / DSM 1962 / NBRC 6347 / NRRL 1970)</name>
    <name type="common">Soil fungus</name>
    <dbReference type="NCBI Taxonomy" id="306901"/>
    <lineage>
        <taxon>Eukaryota</taxon>
        <taxon>Fungi</taxon>
        <taxon>Dikarya</taxon>
        <taxon>Ascomycota</taxon>
        <taxon>Pezizomycotina</taxon>
        <taxon>Sordariomycetes</taxon>
        <taxon>Sordariomycetidae</taxon>
        <taxon>Sordariales</taxon>
        <taxon>Chaetomiaceae</taxon>
        <taxon>Chaetomium</taxon>
    </lineage>
</organism>
<name>MZT1_CHAGB</name>
<protein>
    <recommendedName>
        <fullName>Mitotic-spindle organizing protein 1</fullName>
    </recommendedName>
    <alternativeName>
        <fullName>Mitotic-spindle organizing protein associated with a ring of gamma-tubulin 1</fullName>
    </alternativeName>
</protein>
<keyword id="KW-0963">Cytoplasm</keyword>
<keyword id="KW-0206">Cytoskeleton</keyword>
<keyword id="KW-1185">Reference proteome</keyword>
<dbReference type="EMBL" id="CH408033">
    <property type="protein sequence ID" value="EAQ86685.1"/>
    <property type="molecule type" value="Genomic_DNA"/>
</dbReference>
<dbReference type="RefSeq" id="XP_001225594.1">
    <property type="nucleotide sequence ID" value="XM_001225593.1"/>
</dbReference>
<dbReference type="SMR" id="Q2GVR6"/>
<dbReference type="STRING" id="306901.Q2GVR6"/>
<dbReference type="GeneID" id="4394188"/>
<dbReference type="VEuPathDB" id="FungiDB:CHGG_07938"/>
<dbReference type="eggNOG" id="ENOG502S6UI">
    <property type="taxonomic scope" value="Eukaryota"/>
</dbReference>
<dbReference type="HOGENOM" id="CLU_160285_2_0_1"/>
<dbReference type="InParanoid" id="Q2GVR6"/>
<dbReference type="OMA" id="ILYEMAQ"/>
<dbReference type="OrthoDB" id="48571at2759"/>
<dbReference type="Proteomes" id="UP000001056">
    <property type="component" value="Unassembled WGS sequence"/>
</dbReference>
<dbReference type="GO" id="GO:0005737">
    <property type="term" value="C:cytoplasm"/>
    <property type="evidence" value="ECO:0007669"/>
    <property type="project" value="UniProtKB-KW"/>
</dbReference>
<dbReference type="GO" id="GO:0000931">
    <property type="term" value="C:gamma-tubulin ring complex"/>
    <property type="evidence" value="ECO:0007669"/>
    <property type="project" value="InterPro"/>
</dbReference>
<dbReference type="GO" id="GO:0031021">
    <property type="term" value="C:interphase microtubule organizing center"/>
    <property type="evidence" value="ECO:0007669"/>
    <property type="project" value="TreeGrafter"/>
</dbReference>
<dbReference type="GO" id="GO:0044732">
    <property type="term" value="C:mitotic spindle pole body"/>
    <property type="evidence" value="ECO:0007669"/>
    <property type="project" value="TreeGrafter"/>
</dbReference>
<dbReference type="GO" id="GO:0005819">
    <property type="term" value="C:spindle"/>
    <property type="evidence" value="ECO:0007669"/>
    <property type="project" value="TreeGrafter"/>
</dbReference>
<dbReference type="GO" id="GO:0033566">
    <property type="term" value="P:gamma-tubulin complex localization"/>
    <property type="evidence" value="ECO:0007669"/>
    <property type="project" value="InterPro"/>
</dbReference>
<dbReference type="GO" id="GO:0051415">
    <property type="term" value="P:microtubule nucleation by interphase microtubule organizing center"/>
    <property type="evidence" value="ECO:0007669"/>
    <property type="project" value="TreeGrafter"/>
</dbReference>
<dbReference type="GO" id="GO:0090307">
    <property type="term" value="P:mitotic spindle assembly"/>
    <property type="evidence" value="ECO:0007669"/>
    <property type="project" value="TreeGrafter"/>
</dbReference>
<dbReference type="InterPro" id="IPR022214">
    <property type="entry name" value="MZT1"/>
</dbReference>
<dbReference type="PANTHER" id="PTHR28520">
    <property type="entry name" value="MITOTIC-SPINDLE ORGANIZING PROTEIN 1"/>
    <property type="match status" value="1"/>
</dbReference>
<dbReference type="PANTHER" id="PTHR28520:SF2">
    <property type="entry name" value="MITOTIC-SPINDLE ORGANIZING PROTEIN 1"/>
    <property type="match status" value="1"/>
</dbReference>
<dbReference type="Pfam" id="PF12554">
    <property type="entry name" value="MOZART1"/>
    <property type="match status" value="1"/>
</dbReference>
<comment type="function">
    <text evidence="1">Required for gamma-tubulin complex recruitment to the microtubule organizing center (MTOC).</text>
</comment>
<comment type="subunit">
    <text evidence="1">Part of the gamma-tubulin complex.</text>
</comment>
<comment type="subcellular location">
    <subcellularLocation>
        <location evidence="1">Cytoplasm</location>
        <location evidence="1">Cytoskeleton</location>
        <location evidence="1">Microtubule organizing center</location>
        <location evidence="1">Spindle pole body</location>
    </subcellularLocation>
</comment>
<comment type="similarity">
    <text evidence="2">Belongs to the MOZART1 family.</text>
</comment>
<gene>
    <name type="ORF">CHGG_07938</name>
</gene>
<feature type="chain" id="PRO_0000365081" description="Mitotic-spindle organizing protein 1">
    <location>
        <begin position="1"/>
        <end position="87"/>
    </location>
</feature>
<accession>Q2GVR6</accession>
<proteinExistence type="inferred from homology"/>
<reference key="1">
    <citation type="journal article" date="2015" name="Genome Announc.">
        <title>Draft genome sequence of the cellulolytic fungus Chaetomium globosum.</title>
        <authorList>
            <person name="Cuomo C.A."/>
            <person name="Untereiner W.A."/>
            <person name="Ma L.-J."/>
            <person name="Grabherr M."/>
            <person name="Birren B.W."/>
        </authorList>
    </citation>
    <scope>NUCLEOTIDE SEQUENCE [LARGE SCALE GENOMIC DNA]</scope>
    <source>
        <strain>ATCC 6205 / CBS 148.51 / DSM 1962 / NBRC 6347 / NRRL 1970</strain>
    </source>
</reference>